<evidence type="ECO:0000255" key="1">
    <source>
        <dbReference type="HAMAP-Rule" id="MF_01279"/>
    </source>
</evidence>
<protein>
    <recommendedName>
        <fullName evidence="1">Xaa-Pro dipeptidase</fullName>
        <shortName evidence="1">X-Pro dipeptidase</shortName>
        <ecNumber evidence="1">3.4.13.9</ecNumber>
    </recommendedName>
    <alternativeName>
        <fullName evidence="1">Imidodipeptidase</fullName>
    </alternativeName>
    <alternativeName>
        <fullName evidence="1">Proline dipeptidase</fullName>
        <shortName evidence="1">Prolidase</shortName>
    </alternativeName>
</protein>
<keyword id="KW-0224">Dipeptidase</keyword>
<keyword id="KW-0378">Hydrolase</keyword>
<keyword id="KW-0464">Manganese</keyword>
<keyword id="KW-0479">Metal-binding</keyword>
<keyword id="KW-0482">Metalloprotease</keyword>
<keyword id="KW-0645">Protease</keyword>
<comment type="function">
    <text evidence="1">Splits dipeptides with a prolyl residue in the C-terminal position.</text>
</comment>
<comment type="catalytic activity">
    <reaction evidence="1">
        <text>Xaa-L-Pro dipeptide + H2O = an L-alpha-amino acid + L-proline</text>
        <dbReference type="Rhea" id="RHEA:76407"/>
        <dbReference type="ChEBI" id="CHEBI:15377"/>
        <dbReference type="ChEBI" id="CHEBI:59869"/>
        <dbReference type="ChEBI" id="CHEBI:60039"/>
        <dbReference type="ChEBI" id="CHEBI:195196"/>
        <dbReference type="EC" id="3.4.13.9"/>
    </reaction>
</comment>
<comment type="cofactor">
    <cofactor evidence="1">
        <name>Mn(2+)</name>
        <dbReference type="ChEBI" id="CHEBI:29035"/>
    </cofactor>
    <text evidence="1">Binds 2 manganese ions per subunit.</text>
</comment>
<comment type="similarity">
    <text evidence="1">Belongs to the peptidase M24B family. Bacterial-type prolidase subfamily.</text>
</comment>
<name>PEPQ_YERE8</name>
<sequence>METLASLYNEHLSTLQQRTRDVLERHQLDALLIHSGELQRIFLDDRDYPFKVNAQFKAWVPVTQVPNCWLWVDGVNTPKLWFYSPVDYWHCVEPLPDSFWTKAIDIQPLVNANDIAQLLPVQRERVAYIGYAQQRAQALGFSAENINPKPVLDYLHFYRSYKTDYELACMREAQKTAVAGHNAAHEAFLSGMSEFDINLAYLMATGQRDTDVPYDNIVALNEHSAVLHYTTLQHQPPAEIRSFLIDAGAEYNGYAADLTRTYVAGSKNTADSKNDFAALIKDLNNEQLGLIKTLKCGVNYTEYNVQMHQRIAKLLRTHNLVTGISEEAMVEQGITCPFLPHGLGHPLGLQVHDTAGFMQDDKGAHLSAPSKYPYLRCTRILQPRMVLTIEPGLYFIESLLAPWRSGEFSQHFNWDLIETLKPYGGIRIEDNIVIHENRVENMTRDLKLA</sequence>
<feature type="chain" id="PRO_0000303878" description="Xaa-Pro dipeptidase">
    <location>
        <begin position="1"/>
        <end position="449"/>
    </location>
</feature>
<feature type="binding site" evidence="1">
    <location>
        <position position="246"/>
    </location>
    <ligand>
        <name>Mn(2+)</name>
        <dbReference type="ChEBI" id="CHEBI:29035"/>
        <label>2</label>
    </ligand>
</feature>
<feature type="binding site" evidence="1">
    <location>
        <position position="257"/>
    </location>
    <ligand>
        <name>Mn(2+)</name>
        <dbReference type="ChEBI" id="CHEBI:29035"/>
        <label>1</label>
    </ligand>
</feature>
<feature type="binding site" evidence="1">
    <location>
        <position position="257"/>
    </location>
    <ligand>
        <name>Mn(2+)</name>
        <dbReference type="ChEBI" id="CHEBI:29035"/>
        <label>2</label>
    </ligand>
</feature>
<feature type="binding site" evidence="1">
    <location>
        <position position="345"/>
    </location>
    <ligand>
        <name>Mn(2+)</name>
        <dbReference type="ChEBI" id="CHEBI:29035"/>
        <label>1</label>
    </ligand>
</feature>
<feature type="binding site" evidence="1">
    <location>
        <position position="390"/>
    </location>
    <ligand>
        <name>Mn(2+)</name>
        <dbReference type="ChEBI" id="CHEBI:29035"/>
        <label>1</label>
    </ligand>
</feature>
<feature type="binding site" evidence="1">
    <location>
        <position position="429"/>
    </location>
    <ligand>
        <name>Mn(2+)</name>
        <dbReference type="ChEBI" id="CHEBI:29035"/>
        <label>1</label>
    </ligand>
</feature>
<feature type="binding site" evidence="1">
    <location>
        <position position="429"/>
    </location>
    <ligand>
        <name>Mn(2+)</name>
        <dbReference type="ChEBI" id="CHEBI:29035"/>
        <label>2</label>
    </ligand>
</feature>
<dbReference type="EC" id="3.4.13.9" evidence="1"/>
<dbReference type="EMBL" id="AM286415">
    <property type="protein sequence ID" value="CAL10403.1"/>
    <property type="molecule type" value="Genomic_DNA"/>
</dbReference>
<dbReference type="RefSeq" id="WP_011815378.1">
    <property type="nucleotide sequence ID" value="NC_008800.1"/>
</dbReference>
<dbReference type="RefSeq" id="YP_001004654.1">
    <property type="nucleotide sequence ID" value="NC_008800.1"/>
</dbReference>
<dbReference type="SMR" id="A1JIG5"/>
<dbReference type="MEROPS" id="M24.003"/>
<dbReference type="KEGG" id="yen:YE0269"/>
<dbReference type="PATRIC" id="fig|393305.7.peg.361"/>
<dbReference type="eggNOG" id="COG0006">
    <property type="taxonomic scope" value="Bacteria"/>
</dbReference>
<dbReference type="HOGENOM" id="CLU_050675_0_0_6"/>
<dbReference type="OrthoDB" id="9806388at2"/>
<dbReference type="Proteomes" id="UP000000642">
    <property type="component" value="Chromosome"/>
</dbReference>
<dbReference type="GO" id="GO:0005829">
    <property type="term" value="C:cytosol"/>
    <property type="evidence" value="ECO:0007669"/>
    <property type="project" value="TreeGrafter"/>
</dbReference>
<dbReference type="GO" id="GO:0004177">
    <property type="term" value="F:aminopeptidase activity"/>
    <property type="evidence" value="ECO:0007669"/>
    <property type="project" value="TreeGrafter"/>
</dbReference>
<dbReference type="GO" id="GO:0046872">
    <property type="term" value="F:metal ion binding"/>
    <property type="evidence" value="ECO:0007669"/>
    <property type="project" value="UniProtKB-KW"/>
</dbReference>
<dbReference type="GO" id="GO:0008235">
    <property type="term" value="F:metalloexopeptidase activity"/>
    <property type="evidence" value="ECO:0007669"/>
    <property type="project" value="UniProtKB-UniRule"/>
</dbReference>
<dbReference type="GO" id="GO:0016795">
    <property type="term" value="F:phosphoric triester hydrolase activity"/>
    <property type="evidence" value="ECO:0007669"/>
    <property type="project" value="InterPro"/>
</dbReference>
<dbReference type="GO" id="GO:0102009">
    <property type="term" value="F:proline dipeptidase activity"/>
    <property type="evidence" value="ECO:0007669"/>
    <property type="project" value="UniProtKB-EC"/>
</dbReference>
<dbReference type="GO" id="GO:0006508">
    <property type="term" value="P:proteolysis"/>
    <property type="evidence" value="ECO:0007669"/>
    <property type="project" value="UniProtKB-KW"/>
</dbReference>
<dbReference type="Gene3D" id="3.90.230.10">
    <property type="entry name" value="Creatinase/methionine aminopeptidase superfamily"/>
    <property type="match status" value="1"/>
</dbReference>
<dbReference type="Gene3D" id="3.40.350.10">
    <property type="entry name" value="Creatinase/prolidase N-terminal domain"/>
    <property type="match status" value="1"/>
</dbReference>
<dbReference type="HAMAP" id="MF_01279">
    <property type="entry name" value="X_Pro_dipeptid"/>
    <property type="match status" value="1"/>
</dbReference>
<dbReference type="InterPro" id="IPR029149">
    <property type="entry name" value="Creatin/AminoP/Spt16_N"/>
</dbReference>
<dbReference type="InterPro" id="IPR036005">
    <property type="entry name" value="Creatinase/aminopeptidase-like"/>
</dbReference>
<dbReference type="InterPro" id="IPR048819">
    <property type="entry name" value="PepQ_N"/>
</dbReference>
<dbReference type="InterPro" id="IPR000994">
    <property type="entry name" value="Pept_M24"/>
</dbReference>
<dbReference type="InterPro" id="IPR001131">
    <property type="entry name" value="Peptidase_M24B_aminopep-P_CS"/>
</dbReference>
<dbReference type="InterPro" id="IPR052433">
    <property type="entry name" value="X-Pro_dipept-like"/>
</dbReference>
<dbReference type="InterPro" id="IPR022846">
    <property type="entry name" value="X_Pro_dipept"/>
</dbReference>
<dbReference type="NCBIfam" id="NF010133">
    <property type="entry name" value="PRK13607.1"/>
    <property type="match status" value="1"/>
</dbReference>
<dbReference type="PANTHER" id="PTHR43226">
    <property type="entry name" value="XAA-PRO AMINOPEPTIDASE 3"/>
    <property type="match status" value="1"/>
</dbReference>
<dbReference type="PANTHER" id="PTHR43226:SF8">
    <property type="entry name" value="XAA-PRO DIPEPTIDASE"/>
    <property type="match status" value="1"/>
</dbReference>
<dbReference type="Pfam" id="PF21216">
    <property type="entry name" value="PepQ_N"/>
    <property type="match status" value="1"/>
</dbReference>
<dbReference type="Pfam" id="PF00557">
    <property type="entry name" value="Peptidase_M24"/>
    <property type="match status" value="1"/>
</dbReference>
<dbReference type="SUPFAM" id="SSF55920">
    <property type="entry name" value="Creatinase/aminopeptidase"/>
    <property type="match status" value="1"/>
</dbReference>
<dbReference type="PROSITE" id="PS00491">
    <property type="entry name" value="PROLINE_PEPTIDASE"/>
    <property type="match status" value="1"/>
</dbReference>
<reference key="1">
    <citation type="journal article" date="2006" name="PLoS Genet.">
        <title>The complete genome sequence and comparative genome analysis of the high pathogenicity Yersinia enterocolitica strain 8081.</title>
        <authorList>
            <person name="Thomson N.R."/>
            <person name="Howard S."/>
            <person name="Wren B.W."/>
            <person name="Holden M.T.G."/>
            <person name="Crossman L."/>
            <person name="Challis G.L."/>
            <person name="Churcher C."/>
            <person name="Mungall K."/>
            <person name="Brooks K."/>
            <person name="Chillingworth T."/>
            <person name="Feltwell T."/>
            <person name="Abdellah Z."/>
            <person name="Hauser H."/>
            <person name="Jagels K."/>
            <person name="Maddison M."/>
            <person name="Moule S."/>
            <person name="Sanders M."/>
            <person name="Whitehead S."/>
            <person name="Quail M.A."/>
            <person name="Dougan G."/>
            <person name="Parkhill J."/>
            <person name="Prentice M.B."/>
        </authorList>
    </citation>
    <scope>NUCLEOTIDE SEQUENCE [LARGE SCALE GENOMIC DNA]</scope>
    <source>
        <strain>NCTC 13174 / 8081</strain>
    </source>
</reference>
<accession>A1JIG5</accession>
<organism>
    <name type="scientific">Yersinia enterocolitica serotype O:8 / biotype 1B (strain NCTC 13174 / 8081)</name>
    <dbReference type="NCBI Taxonomy" id="393305"/>
    <lineage>
        <taxon>Bacteria</taxon>
        <taxon>Pseudomonadati</taxon>
        <taxon>Pseudomonadota</taxon>
        <taxon>Gammaproteobacteria</taxon>
        <taxon>Enterobacterales</taxon>
        <taxon>Yersiniaceae</taxon>
        <taxon>Yersinia</taxon>
    </lineage>
</organism>
<gene>
    <name evidence="1" type="primary">pepQ</name>
    <name type="ordered locus">YE0269</name>
</gene>
<proteinExistence type="inferred from homology"/>